<sequence>LFDQKTIKYIPIHYVLNISPSQEPNYYQHRPVVPINNQQMPYRYYARPVAVRPHAQIPQWQVLPNIYPSTVVRHPYRRPSFIAIPPKKLQDKTVRPNINTIATVEPTLIPTTEPTVNNVVVPEASSEFIITSTPETTTIPVTSPVV</sequence>
<keyword id="KW-0325">Glycoprotein</keyword>
<keyword id="KW-0494">Milk protein</keyword>
<keyword id="KW-0597">Phosphoprotein</keyword>
<keyword id="KW-0964">Secreted</keyword>
<comment type="function">
    <text>Kappa-casein stabilizes micelle formation, preventing casein precipitation in milk.</text>
</comment>
<comment type="subcellular location">
    <subcellularLocation>
        <location>Secreted</location>
    </subcellularLocation>
</comment>
<comment type="tissue specificity">
    <text>Mammary gland specific. Secreted in milk.</text>
</comment>
<comment type="similarity">
    <text evidence="4">Belongs to the kappa-casein family.</text>
</comment>
<dbReference type="EMBL" id="U53892">
    <property type="protein sequence ID" value="AAB08418.1"/>
    <property type="molecule type" value="Genomic_DNA"/>
</dbReference>
<dbReference type="GlyCosmos" id="Q29135">
    <property type="glycosylation" value="4 sites, No reported glycans"/>
</dbReference>
<dbReference type="GO" id="GO:0005615">
    <property type="term" value="C:extracellular space"/>
    <property type="evidence" value="ECO:0007669"/>
    <property type="project" value="TreeGrafter"/>
</dbReference>
<dbReference type="GO" id="GO:0007595">
    <property type="term" value="P:lactation"/>
    <property type="evidence" value="ECO:0007669"/>
    <property type="project" value="TreeGrafter"/>
</dbReference>
<dbReference type="GO" id="GO:0050821">
    <property type="term" value="P:protein stabilization"/>
    <property type="evidence" value="ECO:0007669"/>
    <property type="project" value="TreeGrafter"/>
</dbReference>
<dbReference type="InterPro" id="IPR000117">
    <property type="entry name" value="Casein_kappa"/>
</dbReference>
<dbReference type="PANTHER" id="PTHR11470">
    <property type="entry name" value="KAPPA CASEIN"/>
    <property type="match status" value="1"/>
</dbReference>
<dbReference type="PANTHER" id="PTHR11470:SF2">
    <property type="entry name" value="KAPPA-CASEIN"/>
    <property type="match status" value="1"/>
</dbReference>
<dbReference type="Pfam" id="PF00997">
    <property type="entry name" value="Casein_kappa"/>
    <property type="match status" value="1"/>
</dbReference>
<reference key="1">
    <citation type="journal article" date="1996" name="Mol. Biol. Evol.">
        <title>Evidence from milk casein genes that cetaceans are close relatives of hippopotamid artiodactyls.</title>
        <authorList>
            <person name="Gatesy J."/>
            <person name="Hayashi C."/>
            <person name="Cronin M.A."/>
            <person name="Arctander P."/>
        </authorList>
    </citation>
    <scope>NUCLEOTIDE SEQUENCE [GENOMIC DNA]</scope>
</reference>
<organism>
    <name type="scientific">Tapirus indicus</name>
    <name type="common">Asiatic tapir</name>
    <name type="synonym">Malayan tapir</name>
    <dbReference type="NCBI Taxonomy" id="9802"/>
    <lineage>
        <taxon>Eukaryota</taxon>
        <taxon>Metazoa</taxon>
        <taxon>Chordata</taxon>
        <taxon>Craniata</taxon>
        <taxon>Vertebrata</taxon>
        <taxon>Euteleostomi</taxon>
        <taxon>Mammalia</taxon>
        <taxon>Eutheria</taxon>
        <taxon>Laurasiatheria</taxon>
        <taxon>Perissodactyla</taxon>
        <taxon>Tapiridae</taxon>
        <taxon>Tapirus</taxon>
    </lineage>
</organism>
<name>CASK_TAPIN</name>
<feature type="chain" id="PRO_0000144120" description="Kappa-casein">
    <location>
        <begin position="1" status="less than"/>
        <end position="146"/>
    </location>
</feature>
<feature type="site" description="Cleavage; by chymosin/rennin" evidence="1">
    <location>
        <begin position="80"/>
        <end position="81"/>
    </location>
</feature>
<feature type="modified residue" description="Phosphoserine; alternate" evidence="2">
    <location>
        <position position="125"/>
    </location>
</feature>
<feature type="modified residue" description="Phosphoserine" evidence="3">
    <location>
        <position position="143"/>
    </location>
</feature>
<feature type="glycosylation site" description="O-linked (GalNAc...) threonine" evidence="2">
    <location>
        <position position="107"/>
    </location>
</feature>
<feature type="glycosylation site" description="O-linked (GalNAc...) threonine" evidence="2">
    <location>
        <position position="112"/>
    </location>
</feature>
<feature type="glycosylation site" description="O-linked (GalNAc...) serine; alternate" evidence="2">
    <location>
        <position position="125"/>
    </location>
</feature>
<feature type="glycosylation site" description="O-linked (GalNAc...) threonine" evidence="2">
    <location>
        <position position="142"/>
    </location>
</feature>
<feature type="non-terminal residue">
    <location>
        <position position="1"/>
    </location>
</feature>
<evidence type="ECO:0000250" key="1"/>
<evidence type="ECO:0000250" key="2">
    <source>
        <dbReference type="UniProtKB" id="P02668"/>
    </source>
</evidence>
<evidence type="ECO:0000250" key="3">
    <source>
        <dbReference type="UniProtKB" id="P02670"/>
    </source>
</evidence>
<evidence type="ECO:0000305" key="4"/>
<gene>
    <name type="primary">CSN3</name>
    <name type="synonym">CSN10</name>
    <name type="synonym">CSNK</name>
</gene>
<accession>Q29135</accession>
<proteinExistence type="evidence at transcript level"/>
<protein>
    <recommendedName>
        <fullName>Kappa-casein</fullName>
    </recommendedName>
</protein>